<proteinExistence type="evidence at protein level"/>
<gene>
    <name type="primary">LPCAT4</name>
    <name type="synonym">AGPAT7</name>
    <name type="synonym">AYTL3</name>
    <name type="synonym">LPEAT2</name>
</gene>
<dbReference type="EC" id="2.3.1.23" evidence="5"/>
<dbReference type="EC" id="2.3.1.n6" evidence="5"/>
<dbReference type="EC" id="2.3.1.121" evidence="5"/>
<dbReference type="EC" id="2.3.1.67" evidence="5"/>
<dbReference type="EC" id="2.3.1.n7" evidence="5"/>
<dbReference type="EMBL" id="AY734233">
    <property type="protein sequence ID" value="AAU34184.1"/>
    <property type="molecule type" value="mRNA"/>
</dbReference>
<dbReference type="EMBL" id="AF529233">
    <property type="protein sequence ID" value="AAP97722.1"/>
    <property type="status" value="ALT_FRAME"/>
    <property type="molecule type" value="mRNA"/>
</dbReference>
<dbReference type="EMBL" id="AF542964">
    <property type="protein sequence ID" value="AAN33178.1"/>
    <property type="status" value="ALT_FRAME"/>
    <property type="molecule type" value="mRNA"/>
</dbReference>
<dbReference type="EMBL" id="AK290273">
    <property type="protein sequence ID" value="BAF82962.1"/>
    <property type="molecule type" value="mRNA"/>
</dbReference>
<dbReference type="EMBL" id="CH471125">
    <property type="protein sequence ID" value="EAW92306.1"/>
    <property type="molecule type" value="Genomic_DNA"/>
</dbReference>
<dbReference type="EMBL" id="BC024892">
    <property type="protein sequence ID" value="AAH24892.2"/>
    <property type="molecule type" value="mRNA"/>
</dbReference>
<dbReference type="EMBL" id="BC092463">
    <property type="protein sequence ID" value="AAH92463.1"/>
    <property type="molecule type" value="mRNA"/>
</dbReference>
<dbReference type="EMBL" id="AF007155">
    <property type="protein sequence ID" value="AAC19156.1"/>
    <property type="status" value="ALT_SEQ"/>
    <property type="molecule type" value="mRNA"/>
</dbReference>
<dbReference type="CCDS" id="CCDS32191.1"/>
<dbReference type="RefSeq" id="NP_705841.2">
    <property type="nucleotide sequence ID" value="NM_153613.3"/>
</dbReference>
<dbReference type="SMR" id="Q643R3"/>
<dbReference type="BioGRID" id="129039">
    <property type="interactions" value="73"/>
</dbReference>
<dbReference type="FunCoup" id="Q643R3">
    <property type="interactions" value="837"/>
</dbReference>
<dbReference type="IntAct" id="Q643R3">
    <property type="interactions" value="40"/>
</dbReference>
<dbReference type="MINT" id="Q643R3"/>
<dbReference type="STRING" id="9606.ENSP00000317300"/>
<dbReference type="SwissLipids" id="SLP:000000294"/>
<dbReference type="GlyCosmos" id="Q643R3">
    <property type="glycosylation" value="1 site, No reported glycans"/>
</dbReference>
<dbReference type="GlyGen" id="Q643R3">
    <property type="glycosylation" value="3 sites, 3 N-linked glycans (1 site)"/>
</dbReference>
<dbReference type="iPTMnet" id="Q643R3"/>
<dbReference type="MetOSite" id="Q643R3"/>
<dbReference type="PhosphoSitePlus" id="Q643R3"/>
<dbReference type="SwissPalm" id="Q643R3"/>
<dbReference type="BioMuta" id="LPCAT4"/>
<dbReference type="DMDM" id="74736281"/>
<dbReference type="jPOST" id="Q643R3"/>
<dbReference type="MassIVE" id="Q643R3"/>
<dbReference type="PaxDb" id="9606-ENSP00000317300"/>
<dbReference type="PeptideAtlas" id="Q643R3"/>
<dbReference type="ProteomicsDB" id="65914"/>
<dbReference type="Pumba" id="Q643R3"/>
<dbReference type="Antibodypedia" id="22726">
    <property type="antibodies" value="67 antibodies from 22 providers"/>
</dbReference>
<dbReference type="DNASU" id="254531"/>
<dbReference type="Ensembl" id="ENST00000314891.11">
    <property type="protein sequence ID" value="ENSP00000317300.6"/>
    <property type="gene ID" value="ENSG00000176454.15"/>
</dbReference>
<dbReference type="Ensembl" id="ENST00000709501.1">
    <property type="protein sequence ID" value="ENSP00000517730.1"/>
    <property type="gene ID" value="ENSG00000291994.1"/>
</dbReference>
<dbReference type="GeneID" id="254531"/>
<dbReference type="KEGG" id="hsa:254531"/>
<dbReference type="MANE-Select" id="ENST00000314891.11">
    <property type="protein sequence ID" value="ENSP00000317300.6"/>
    <property type="RefSeq nucleotide sequence ID" value="NM_153613.3"/>
    <property type="RefSeq protein sequence ID" value="NP_705841.2"/>
</dbReference>
<dbReference type="UCSC" id="uc001zig.4">
    <property type="organism name" value="human"/>
</dbReference>
<dbReference type="AGR" id="HGNC:30059"/>
<dbReference type="CTD" id="254531"/>
<dbReference type="DisGeNET" id="254531"/>
<dbReference type="GeneCards" id="LPCAT4"/>
<dbReference type="HGNC" id="HGNC:30059">
    <property type="gene designation" value="LPCAT4"/>
</dbReference>
<dbReference type="HPA" id="ENSG00000176454">
    <property type="expression patterns" value="Low tissue specificity"/>
</dbReference>
<dbReference type="MIM" id="612039">
    <property type="type" value="gene"/>
</dbReference>
<dbReference type="neXtProt" id="NX_Q643R3"/>
<dbReference type="OpenTargets" id="ENSG00000176454"/>
<dbReference type="PharmGKB" id="PA162394297"/>
<dbReference type="VEuPathDB" id="HostDB:ENSG00000176454"/>
<dbReference type="eggNOG" id="KOG4666">
    <property type="taxonomic scope" value="Eukaryota"/>
</dbReference>
<dbReference type="GeneTree" id="ENSGT01030000234574"/>
<dbReference type="HOGENOM" id="CLU_025017_1_0_1"/>
<dbReference type="InParanoid" id="Q643R3"/>
<dbReference type="OMA" id="HEYPHPF"/>
<dbReference type="OrthoDB" id="272512at2759"/>
<dbReference type="PAN-GO" id="Q643R3">
    <property type="GO annotations" value="0 GO annotations based on evolutionary models"/>
</dbReference>
<dbReference type="PhylomeDB" id="Q643R3"/>
<dbReference type="TreeFam" id="TF323244"/>
<dbReference type="BioCyc" id="MetaCyc:HS16664-MONOMER"/>
<dbReference type="BRENDA" id="2.3.1.23">
    <property type="organism ID" value="2681"/>
</dbReference>
<dbReference type="BRENDA" id="2.3.1.51">
    <property type="organism ID" value="2681"/>
</dbReference>
<dbReference type="PathwayCommons" id="Q643R3"/>
<dbReference type="Reactome" id="R-HSA-1482788">
    <property type="pathway name" value="Acyl chain remodelling of PC"/>
</dbReference>
<dbReference type="Reactome" id="R-HSA-1482801">
    <property type="pathway name" value="Acyl chain remodelling of PS"/>
</dbReference>
<dbReference type="Reactome" id="R-HSA-1482839">
    <property type="pathway name" value="Acyl chain remodelling of PE"/>
</dbReference>
<dbReference type="Reactome" id="R-HSA-1482925">
    <property type="pathway name" value="Acyl chain remodelling of PG"/>
</dbReference>
<dbReference type="Reactome" id="R-HSA-1483166">
    <property type="pathway name" value="Synthesis of PA"/>
</dbReference>
<dbReference type="SABIO-RK" id="Q643R3"/>
<dbReference type="SignaLink" id="Q643R3"/>
<dbReference type="SIGNOR" id="Q643R3"/>
<dbReference type="UniPathway" id="UPA00085"/>
<dbReference type="BioGRID-ORCS" id="254531">
    <property type="hits" value="13 hits in 1153 CRISPR screens"/>
</dbReference>
<dbReference type="ChiTaRS" id="LPCAT4">
    <property type="organism name" value="human"/>
</dbReference>
<dbReference type="GenomeRNAi" id="254531"/>
<dbReference type="Pharos" id="Q643R3">
    <property type="development level" value="Tdark"/>
</dbReference>
<dbReference type="PRO" id="PR:Q643R3"/>
<dbReference type="Proteomes" id="UP000005640">
    <property type="component" value="Chromosome 15"/>
</dbReference>
<dbReference type="RNAct" id="Q643R3">
    <property type="molecule type" value="protein"/>
</dbReference>
<dbReference type="Bgee" id="ENSG00000176454">
    <property type="expression patterns" value="Expressed in right hemisphere of cerebellum and 196 other cell types or tissues"/>
</dbReference>
<dbReference type="ExpressionAtlas" id="Q643R3">
    <property type="expression patterns" value="baseline and differential"/>
</dbReference>
<dbReference type="GO" id="GO:0005783">
    <property type="term" value="C:endoplasmic reticulum"/>
    <property type="evidence" value="ECO:0000314"/>
    <property type="project" value="MGI"/>
</dbReference>
<dbReference type="GO" id="GO:0005789">
    <property type="term" value="C:endoplasmic reticulum membrane"/>
    <property type="evidence" value="ECO:0000304"/>
    <property type="project" value="Reactome"/>
</dbReference>
<dbReference type="GO" id="GO:0016020">
    <property type="term" value="C:membrane"/>
    <property type="evidence" value="ECO:0007005"/>
    <property type="project" value="UniProtKB"/>
</dbReference>
<dbReference type="GO" id="GO:0003841">
    <property type="term" value="F:1-acylglycerol-3-phosphate O-acyltransferase activity"/>
    <property type="evidence" value="ECO:0000304"/>
    <property type="project" value="Reactome"/>
</dbReference>
<dbReference type="GO" id="GO:0047184">
    <property type="term" value="F:1-acylglycerophosphocholine O-acyltransferase activity"/>
    <property type="evidence" value="ECO:0000314"/>
    <property type="project" value="UniProtKB"/>
</dbReference>
<dbReference type="GO" id="GO:0106262">
    <property type="term" value="F:1-acylglycerophosphoethanolamine O-acyltransferase activity"/>
    <property type="evidence" value="ECO:0000314"/>
    <property type="project" value="UniProtKB"/>
</dbReference>
<dbReference type="GO" id="GO:0106263">
    <property type="term" value="F:1-acylglycerophosphoserine O-acyltransferase activity"/>
    <property type="evidence" value="ECO:0000314"/>
    <property type="project" value="UniProtKB"/>
</dbReference>
<dbReference type="GO" id="GO:0047166">
    <property type="term" value="F:1-alkenylglycerophosphoethanolamine O-acyltransferase activity"/>
    <property type="evidence" value="ECO:0000314"/>
    <property type="project" value="UniProtKB"/>
</dbReference>
<dbReference type="GO" id="GO:0047192">
    <property type="term" value="F:1-alkylglycerophosphocholine O-acetyltransferase activity"/>
    <property type="evidence" value="ECO:0000314"/>
    <property type="project" value="UniProtKB"/>
</dbReference>
<dbReference type="GO" id="GO:0047144">
    <property type="term" value="F:2-acylglycerol-3-phosphate O-acyltransferase activity"/>
    <property type="evidence" value="ECO:0000304"/>
    <property type="project" value="Reactome"/>
</dbReference>
<dbReference type="GO" id="GO:0042171">
    <property type="term" value="F:lysophosphatidic acid acyltransferase activity"/>
    <property type="evidence" value="ECO:0000318"/>
    <property type="project" value="GO_Central"/>
</dbReference>
<dbReference type="GO" id="GO:0071617">
    <property type="term" value="F:lysophospholipid acyltransferase activity"/>
    <property type="evidence" value="ECO:0000314"/>
    <property type="project" value="MGI"/>
</dbReference>
<dbReference type="GO" id="GO:0006654">
    <property type="term" value="P:phosphatidic acid biosynthetic process"/>
    <property type="evidence" value="ECO:0000304"/>
    <property type="project" value="Reactome"/>
</dbReference>
<dbReference type="GO" id="GO:0036151">
    <property type="term" value="P:phosphatidylcholine acyl-chain remodeling"/>
    <property type="evidence" value="ECO:0000314"/>
    <property type="project" value="UniProtKB"/>
</dbReference>
<dbReference type="GO" id="GO:0036152">
    <property type="term" value="P:phosphatidylethanolamine acyl-chain remodeling"/>
    <property type="evidence" value="ECO:0000314"/>
    <property type="project" value="UniProtKB"/>
</dbReference>
<dbReference type="GO" id="GO:0036148">
    <property type="term" value="P:phosphatidylglycerol acyl-chain remodeling"/>
    <property type="evidence" value="ECO:0000304"/>
    <property type="project" value="Reactome"/>
</dbReference>
<dbReference type="GO" id="GO:0036150">
    <property type="term" value="P:phosphatidylserine acyl-chain remodeling"/>
    <property type="evidence" value="ECO:0000314"/>
    <property type="project" value="UniProtKB"/>
</dbReference>
<dbReference type="GO" id="GO:0006644">
    <property type="term" value="P:phospholipid metabolic process"/>
    <property type="evidence" value="ECO:0000314"/>
    <property type="project" value="MGI"/>
</dbReference>
<dbReference type="CDD" id="cd07991">
    <property type="entry name" value="LPLAT_LPCAT1-like"/>
    <property type="match status" value="1"/>
</dbReference>
<dbReference type="InterPro" id="IPR045252">
    <property type="entry name" value="LPCAT1-like"/>
</dbReference>
<dbReference type="InterPro" id="IPR002123">
    <property type="entry name" value="Plipid/glycerol_acylTrfase"/>
</dbReference>
<dbReference type="PANTHER" id="PTHR23063:SF7">
    <property type="entry name" value="LYSOPHOSPHOLIPID ACYLTRANSFERASE LPCAT4"/>
    <property type="match status" value="1"/>
</dbReference>
<dbReference type="PANTHER" id="PTHR23063">
    <property type="entry name" value="PHOSPHOLIPID ACYLTRANSFERASE"/>
    <property type="match status" value="1"/>
</dbReference>
<dbReference type="Pfam" id="PF01553">
    <property type="entry name" value="Acyltransferase"/>
    <property type="match status" value="1"/>
</dbReference>
<dbReference type="SMART" id="SM00563">
    <property type="entry name" value="PlsC"/>
    <property type="match status" value="1"/>
</dbReference>
<dbReference type="SUPFAM" id="SSF69593">
    <property type="entry name" value="Glycerol-3-phosphate (1)-acyltransferase"/>
    <property type="match status" value="1"/>
</dbReference>
<name>LPCT4_HUMAN</name>
<evidence type="ECO:0000250" key="1">
    <source>
        <dbReference type="UniProtKB" id="Q6NVG1"/>
    </source>
</evidence>
<evidence type="ECO:0000255" key="2"/>
<evidence type="ECO:0000256" key="3">
    <source>
        <dbReference type="SAM" id="MobiDB-lite"/>
    </source>
</evidence>
<evidence type="ECO:0000269" key="4">
    <source>
    </source>
</evidence>
<evidence type="ECO:0000269" key="5">
    <source>
    </source>
</evidence>
<evidence type="ECO:0000305" key="6"/>
<evidence type="ECO:0000305" key="7">
    <source>
    </source>
</evidence>
<reference key="1">
    <citation type="journal article" date="2005" name="DNA Seq.">
        <title>Cloning and characterization a novel human 1-acyl-sn-glycerol-3-phosphate acyltransferase gene AGPAT7.</title>
        <authorList>
            <person name="Ye G.-M."/>
            <person name="Chen C."/>
            <person name="Huang S."/>
            <person name="Han D.-D."/>
            <person name="Guo J.-H."/>
            <person name="Wan B."/>
            <person name="Yu L."/>
        </authorList>
    </citation>
    <scope>NUCLEOTIDE SEQUENCE [MRNA]</scope>
    <scope>SUBCELLULAR LOCATION</scope>
    <scope>TISSUE SPECIFICITY</scope>
    <source>
        <tissue>Testis</tissue>
    </source>
</reference>
<reference key="2">
    <citation type="submission" date="2002-07" db="EMBL/GenBank/DDBJ databases">
        <authorList>
            <person name="Guo J.H."/>
            <person name="Yu L."/>
        </authorList>
    </citation>
    <scope>NUCLEOTIDE SEQUENCE [LARGE SCALE MRNA]</scope>
    <source>
        <tissue>Ovary</tissue>
    </source>
</reference>
<reference key="3">
    <citation type="journal article" date="2004" name="Nat. Genet.">
        <title>Complete sequencing and characterization of 21,243 full-length human cDNAs.</title>
        <authorList>
            <person name="Ota T."/>
            <person name="Suzuki Y."/>
            <person name="Nishikawa T."/>
            <person name="Otsuki T."/>
            <person name="Sugiyama T."/>
            <person name="Irie R."/>
            <person name="Wakamatsu A."/>
            <person name="Hayashi K."/>
            <person name="Sato H."/>
            <person name="Nagai K."/>
            <person name="Kimura K."/>
            <person name="Makita H."/>
            <person name="Sekine M."/>
            <person name="Obayashi M."/>
            <person name="Nishi T."/>
            <person name="Shibahara T."/>
            <person name="Tanaka T."/>
            <person name="Ishii S."/>
            <person name="Yamamoto J."/>
            <person name="Saito K."/>
            <person name="Kawai Y."/>
            <person name="Isono Y."/>
            <person name="Nakamura Y."/>
            <person name="Nagahari K."/>
            <person name="Murakami K."/>
            <person name="Yasuda T."/>
            <person name="Iwayanagi T."/>
            <person name="Wagatsuma M."/>
            <person name="Shiratori A."/>
            <person name="Sudo H."/>
            <person name="Hosoiri T."/>
            <person name="Kaku Y."/>
            <person name="Kodaira H."/>
            <person name="Kondo H."/>
            <person name="Sugawara M."/>
            <person name="Takahashi M."/>
            <person name="Kanda K."/>
            <person name="Yokoi T."/>
            <person name="Furuya T."/>
            <person name="Kikkawa E."/>
            <person name="Omura Y."/>
            <person name="Abe K."/>
            <person name="Kamihara K."/>
            <person name="Katsuta N."/>
            <person name="Sato K."/>
            <person name="Tanikawa M."/>
            <person name="Yamazaki M."/>
            <person name="Ninomiya K."/>
            <person name="Ishibashi T."/>
            <person name="Yamashita H."/>
            <person name="Murakawa K."/>
            <person name="Fujimori K."/>
            <person name="Tanai H."/>
            <person name="Kimata M."/>
            <person name="Watanabe M."/>
            <person name="Hiraoka S."/>
            <person name="Chiba Y."/>
            <person name="Ishida S."/>
            <person name="Ono Y."/>
            <person name="Takiguchi S."/>
            <person name="Watanabe S."/>
            <person name="Yosida M."/>
            <person name="Hotuta T."/>
            <person name="Kusano J."/>
            <person name="Kanehori K."/>
            <person name="Takahashi-Fujii A."/>
            <person name="Hara H."/>
            <person name="Tanase T.-O."/>
            <person name="Nomura Y."/>
            <person name="Togiya S."/>
            <person name="Komai F."/>
            <person name="Hara R."/>
            <person name="Takeuchi K."/>
            <person name="Arita M."/>
            <person name="Imose N."/>
            <person name="Musashino K."/>
            <person name="Yuuki H."/>
            <person name="Oshima A."/>
            <person name="Sasaki N."/>
            <person name="Aotsuka S."/>
            <person name="Yoshikawa Y."/>
            <person name="Matsunawa H."/>
            <person name="Ichihara T."/>
            <person name="Shiohata N."/>
            <person name="Sano S."/>
            <person name="Moriya S."/>
            <person name="Momiyama H."/>
            <person name="Satoh N."/>
            <person name="Takami S."/>
            <person name="Terashima Y."/>
            <person name="Suzuki O."/>
            <person name="Nakagawa S."/>
            <person name="Senoh A."/>
            <person name="Mizoguchi H."/>
            <person name="Goto Y."/>
            <person name="Shimizu F."/>
            <person name="Wakebe H."/>
            <person name="Hishigaki H."/>
            <person name="Watanabe T."/>
            <person name="Sugiyama A."/>
            <person name="Takemoto M."/>
            <person name="Kawakami B."/>
            <person name="Yamazaki M."/>
            <person name="Watanabe K."/>
            <person name="Kumagai A."/>
            <person name="Itakura S."/>
            <person name="Fukuzumi Y."/>
            <person name="Fujimori Y."/>
            <person name="Komiyama M."/>
            <person name="Tashiro H."/>
            <person name="Tanigami A."/>
            <person name="Fujiwara T."/>
            <person name="Ono T."/>
            <person name="Yamada K."/>
            <person name="Fujii Y."/>
            <person name="Ozaki K."/>
            <person name="Hirao M."/>
            <person name="Ohmori Y."/>
            <person name="Kawabata A."/>
            <person name="Hikiji T."/>
            <person name="Kobatake N."/>
            <person name="Inagaki H."/>
            <person name="Ikema Y."/>
            <person name="Okamoto S."/>
            <person name="Okitani R."/>
            <person name="Kawakami T."/>
            <person name="Noguchi S."/>
            <person name="Itoh T."/>
            <person name="Shigeta K."/>
            <person name="Senba T."/>
            <person name="Matsumura K."/>
            <person name="Nakajima Y."/>
            <person name="Mizuno T."/>
            <person name="Morinaga M."/>
            <person name="Sasaki M."/>
            <person name="Togashi T."/>
            <person name="Oyama M."/>
            <person name="Hata H."/>
            <person name="Watanabe M."/>
            <person name="Komatsu T."/>
            <person name="Mizushima-Sugano J."/>
            <person name="Satoh T."/>
            <person name="Shirai Y."/>
            <person name="Takahashi Y."/>
            <person name="Nakagawa K."/>
            <person name="Okumura K."/>
            <person name="Nagase T."/>
            <person name="Nomura N."/>
            <person name="Kikuchi H."/>
            <person name="Masuho Y."/>
            <person name="Yamashita R."/>
            <person name="Nakai K."/>
            <person name="Yada T."/>
            <person name="Nakamura Y."/>
            <person name="Ohara O."/>
            <person name="Isogai T."/>
            <person name="Sugano S."/>
        </authorList>
    </citation>
    <scope>NUCLEOTIDE SEQUENCE [LARGE SCALE MRNA]</scope>
    <source>
        <tissue>Colon</tissue>
    </source>
</reference>
<reference key="4">
    <citation type="submission" date="2005-07" db="EMBL/GenBank/DDBJ databases">
        <authorList>
            <person name="Mural R.J."/>
            <person name="Istrail S."/>
            <person name="Sutton G.G."/>
            <person name="Florea L."/>
            <person name="Halpern A.L."/>
            <person name="Mobarry C.M."/>
            <person name="Lippert R."/>
            <person name="Walenz B."/>
            <person name="Shatkay H."/>
            <person name="Dew I."/>
            <person name="Miller J.R."/>
            <person name="Flanigan M.J."/>
            <person name="Edwards N.J."/>
            <person name="Bolanos R."/>
            <person name="Fasulo D."/>
            <person name="Halldorsson B.V."/>
            <person name="Hannenhalli S."/>
            <person name="Turner R."/>
            <person name="Yooseph S."/>
            <person name="Lu F."/>
            <person name="Nusskern D.R."/>
            <person name="Shue B.C."/>
            <person name="Zheng X.H."/>
            <person name="Zhong F."/>
            <person name="Delcher A.L."/>
            <person name="Huson D.H."/>
            <person name="Kravitz S.A."/>
            <person name="Mouchard L."/>
            <person name="Reinert K."/>
            <person name="Remington K.A."/>
            <person name="Clark A.G."/>
            <person name="Waterman M.S."/>
            <person name="Eichler E.E."/>
            <person name="Adams M.D."/>
            <person name="Hunkapiller M.W."/>
            <person name="Myers E.W."/>
            <person name="Venter J.C."/>
        </authorList>
    </citation>
    <scope>NUCLEOTIDE SEQUENCE [LARGE SCALE GENOMIC DNA]</scope>
</reference>
<reference key="5">
    <citation type="journal article" date="2004" name="Genome Res.">
        <title>The status, quality, and expansion of the NIH full-length cDNA project: the Mammalian Gene Collection (MGC).</title>
        <authorList>
            <consortium name="The MGC Project Team"/>
        </authorList>
    </citation>
    <scope>NUCLEOTIDE SEQUENCE [LARGE SCALE MRNA]</scope>
    <source>
        <tissue>Placenta</tissue>
    </source>
</reference>
<reference key="6">
    <citation type="submission" date="1998-06" db="EMBL/GenBank/DDBJ databases">
        <authorList>
            <person name="Yu W."/>
            <person name="Sarginson J."/>
            <person name="Gibbs R.A."/>
        </authorList>
    </citation>
    <scope>NUCLEOTIDE SEQUENCE [LARGE SCALE MRNA] OF 268-414</scope>
    <source>
        <tissue>Brain</tissue>
    </source>
</reference>
<reference key="7">
    <citation type="journal article" date="2008" name="J. Biol. Chem.">
        <title>Molecular identification of a novel mammalian brain isoform of acyl-CoA:lysophospholipid acyltransferase with prominent ethanolamine lysophospholipid acylating activity, LPEAT2.</title>
        <authorList>
            <person name="Cao J."/>
            <person name="Shan D."/>
            <person name="Revett T."/>
            <person name="Li D."/>
            <person name="Wu L."/>
            <person name="Liu W."/>
            <person name="Tobin J.F."/>
            <person name="Gimeno R.E."/>
        </authorList>
    </citation>
    <scope>FUNCTION</scope>
    <scope>CATALYTIC ACTIVITY</scope>
    <scope>SUBSTRATE SPECIFICITY</scope>
    <scope>BIOPHYSICOCHEMICAL PROPERTIES</scope>
    <scope>SUBCELLULAR LOCATION</scope>
    <scope>TISSUE SPECIFICITY</scope>
</reference>
<reference key="8">
    <citation type="journal article" date="2008" name="Mol. Cell">
        <title>Kinase-selective enrichment enables quantitative phosphoproteomics of the kinome across the cell cycle.</title>
        <authorList>
            <person name="Daub H."/>
            <person name="Olsen J.V."/>
            <person name="Bairlein M."/>
            <person name="Gnad F."/>
            <person name="Oppermann F.S."/>
            <person name="Korner R."/>
            <person name="Greff Z."/>
            <person name="Keri G."/>
            <person name="Stemmann O."/>
            <person name="Mann M."/>
        </authorList>
    </citation>
    <scope>IDENTIFICATION BY MASS SPECTROMETRY [LARGE SCALE ANALYSIS]</scope>
    <source>
        <tissue>Cervix carcinoma</tissue>
    </source>
</reference>
<reference key="9">
    <citation type="journal article" date="2011" name="BMC Syst. Biol.">
        <title>Initial characterization of the human central proteome.</title>
        <authorList>
            <person name="Burkard T.R."/>
            <person name="Planyavsky M."/>
            <person name="Kaupe I."/>
            <person name="Breitwieser F.P."/>
            <person name="Buerckstuemmer T."/>
            <person name="Bennett K.L."/>
            <person name="Superti-Furga G."/>
            <person name="Colinge J."/>
        </authorList>
    </citation>
    <scope>IDENTIFICATION BY MASS SPECTROMETRY [LARGE SCALE ANALYSIS]</scope>
</reference>
<feature type="chain" id="PRO_0000247054" description="Lysophospholipid acyltransferase LPCAT4">
    <location>
        <begin position="1"/>
        <end position="524"/>
    </location>
</feature>
<feature type="transmembrane region" description="Helical" evidence="2">
    <location>
        <begin position="40"/>
        <end position="62"/>
    </location>
</feature>
<feature type="transmembrane region" description="Helical" evidence="2">
    <location>
        <begin position="87"/>
        <end position="107"/>
    </location>
</feature>
<feature type="region of interest" description="Disordered" evidence="3">
    <location>
        <begin position="489"/>
        <end position="524"/>
    </location>
</feature>
<feature type="short sequence motif" description="HXXXXD motif">
    <location>
        <begin position="129"/>
        <end position="134"/>
    </location>
</feature>
<feature type="compositionally biased region" description="Polar residues" evidence="3">
    <location>
        <begin position="493"/>
        <end position="518"/>
    </location>
</feature>
<feature type="glycosylation site" description="N-linked (GlcNAc...) asparagine" evidence="2">
    <location>
        <position position="152"/>
    </location>
</feature>
<accession>Q643R3</accession>
<accession>A8K2K8</accession>
<accession>O43412</accession>
<accession>Q7Z4P4</accession>
<accession>Q8IUL7</accession>
<accession>Q8TB38</accession>
<keyword id="KW-0012">Acyltransferase</keyword>
<keyword id="KW-0256">Endoplasmic reticulum</keyword>
<keyword id="KW-0325">Glycoprotein</keyword>
<keyword id="KW-0444">Lipid biosynthesis</keyword>
<keyword id="KW-0443">Lipid metabolism</keyword>
<keyword id="KW-0472">Membrane</keyword>
<keyword id="KW-0594">Phospholipid biosynthesis</keyword>
<keyword id="KW-1208">Phospholipid metabolism</keyword>
<keyword id="KW-1267">Proteomics identification</keyword>
<keyword id="KW-1185">Reference proteome</keyword>
<keyword id="KW-0808">Transferase</keyword>
<keyword id="KW-0812">Transmembrane</keyword>
<keyword id="KW-1133">Transmembrane helix</keyword>
<comment type="function">
    <text evidence="5">Displays acyl-CoA-dependent lysophospholipid acyltransferase activity with a subset of lysophospholipids as substrates; converts lysophosphatidylethanolamine to phosphatidylethanolamine, lysophosphatidylcholine to phosphatidycholine, 1-alkenyl-lysophatidylethanolamine to 1-alkenyl-phosphatidylethanolamine, lysophosphatidylglycerol and alkyl-lysophosphatidylcholine to phosphatidylglycerol and alkyl-phosphatidylcholine, respectively. In contrast, has no lysophosphatidylinositol, glycerol-3-phosphate, diacylglycerol or lysophosphatidic acid acyltransferase activity. Prefers long chain acyl-CoAs (C16, C18) as acyl donors.</text>
</comment>
<comment type="catalytic activity">
    <reaction evidence="5">
        <text>a 1-acyl-sn-glycero-3-phosphoethanolamine + an acyl-CoA = a 1,2-diacyl-sn-glycero-3-phosphoethanolamine + CoA</text>
        <dbReference type="Rhea" id="RHEA:32995"/>
        <dbReference type="ChEBI" id="CHEBI:57287"/>
        <dbReference type="ChEBI" id="CHEBI:58342"/>
        <dbReference type="ChEBI" id="CHEBI:64381"/>
        <dbReference type="ChEBI" id="CHEBI:64612"/>
        <dbReference type="EC" id="2.3.1.n7"/>
    </reaction>
</comment>
<comment type="catalytic activity">
    <reaction evidence="5">
        <text>a 1-O-(1Z-alkenyl)-sn-glycero-3-phosphoethanolamine + an acyl-CoA = a 1-O-(1Z-alkenyl)-2-acyl-sn-glycero-3-phosphoethanolamine + CoA</text>
        <dbReference type="Rhea" id="RHEA:16245"/>
        <dbReference type="ChEBI" id="CHEBI:57287"/>
        <dbReference type="ChEBI" id="CHEBI:58342"/>
        <dbReference type="ChEBI" id="CHEBI:77288"/>
        <dbReference type="ChEBI" id="CHEBI:77290"/>
        <dbReference type="EC" id="2.3.1.121"/>
    </reaction>
</comment>
<comment type="catalytic activity">
    <reaction evidence="5">
        <text>a 1-acyl-sn-glycero-3-phosphocholine + an acyl-CoA = a 1,2-diacyl-sn-glycero-3-phosphocholine + CoA</text>
        <dbReference type="Rhea" id="RHEA:12937"/>
        <dbReference type="ChEBI" id="CHEBI:57287"/>
        <dbReference type="ChEBI" id="CHEBI:57643"/>
        <dbReference type="ChEBI" id="CHEBI:58168"/>
        <dbReference type="ChEBI" id="CHEBI:58342"/>
        <dbReference type="EC" id="2.3.1.23"/>
    </reaction>
</comment>
<comment type="catalytic activity">
    <reaction evidence="5">
        <text>a 1-O-alkyl-sn-glycero-3-phosphocholine + acetyl-CoA = a 1-O-alkyl-2-acetyl-sn-glycero-3-phosphocholine + CoA</text>
        <dbReference type="Rhea" id="RHEA:18461"/>
        <dbReference type="ChEBI" id="CHEBI:30909"/>
        <dbReference type="ChEBI" id="CHEBI:36707"/>
        <dbReference type="ChEBI" id="CHEBI:57287"/>
        <dbReference type="ChEBI" id="CHEBI:57288"/>
        <dbReference type="EC" id="2.3.1.67"/>
    </reaction>
</comment>
<comment type="catalytic activity">
    <reaction evidence="5">
        <text>a 1-acyl-sn-glycero-3-phospho-L-serine + an acyl-CoA = a 1,2-diacyl-sn-glycero-3-phospho-L-serine + CoA</text>
        <dbReference type="Rhea" id="RHEA:33191"/>
        <dbReference type="ChEBI" id="CHEBI:57262"/>
        <dbReference type="ChEBI" id="CHEBI:57287"/>
        <dbReference type="ChEBI" id="CHEBI:58342"/>
        <dbReference type="ChEBI" id="CHEBI:64379"/>
        <dbReference type="EC" id="2.3.1.n6"/>
    </reaction>
</comment>
<comment type="catalytic activity">
    <reaction evidence="5">
        <text>octanoyl-CoA + a 1-acyl-sn-glycero-3-phosphoethanolamine = 1-acyl-2-octanoyl-sn-glycero-3-phosphoethanolamine + CoA</text>
        <dbReference type="Rhea" id="RHEA:37775"/>
        <dbReference type="ChEBI" id="CHEBI:57287"/>
        <dbReference type="ChEBI" id="CHEBI:57386"/>
        <dbReference type="ChEBI" id="CHEBI:64381"/>
        <dbReference type="ChEBI" id="CHEBI:75263"/>
    </reaction>
    <physiologicalReaction direction="left-to-right" evidence="7">
        <dbReference type="Rhea" id="RHEA:37776"/>
    </physiologicalReaction>
</comment>
<comment type="catalytic activity">
    <reaction evidence="5">
        <text>a 1-acyl-sn-glycero-3-phosphoethanolamine + hexadecanoyl-CoA = 1-acyl-2-hexadecanoyl-sn-glycero-3-phosphoethanolamine + CoA</text>
        <dbReference type="Rhea" id="RHEA:37767"/>
        <dbReference type="ChEBI" id="CHEBI:57287"/>
        <dbReference type="ChEBI" id="CHEBI:57379"/>
        <dbReference type="ChEBI" id="CHEBI:64381"/>
        <dbReference type="ChEBI" id="CHEBI:75265"/>
    </reaction>
    <physiologicalReaction direction="left-to-right" evidence="7">
        <dbReference type="Rhea" id="RHEA:37768"/>
    </physiologicalReaction>
</comment>
<comment type="catalytic activity">
    <reaction evidence="5">
        <text>a 1-acyl-sn-glycero-3-phosphoethanolamine + octadecanoyl-CoA = 1-acyl-2-octadecanoyl-sn-glycero-3-phosphoethanolamine + CoA</text>
        <dbReference type="Rhea" id="RHEA:37771"/>
        <dbReference type="ChEBI" id="CHEBI:57287"/>
        <dbReference type="ChEBI" id="CHEBI:57394"/>
        <dbReference type="ChEBI" id="CHEBI:64381"/>
        <dbReference type="ChEBI" id="CHEBI:75264"/>
    </reaction>
    <physiologicalReaction direction="left-to-right" evidence="7">
        <dbReference type="Rhea" id="RHEA:37772"/>
    </physiologicalReaction>
</comment>
<comment type="catalytic activity">
    <reaction evidence="5">
        <text>a 1-acyl-sn-glycero-3-phosphoethanolamine + (9Z)-octadecenoyl-CoA = 1-acyl-2-(9Z)-octadecenoyl-sn-glycero-3-phosphoethanolamine + CoA</text>
        <dbReference type="Rhea" id="RHEA:37731"/>
        <dbReference type="ChEBI" id="CHEBI:57287"/>
        <dbReference type="ChEBI" id="CHEBI:57387"/>
        <dbReference type="ChEBI" id="CHEBI:64381"/>
        <dbReference type="ChEBI" id="CHEBI:75238"/>
    </reaction>
    <physiologicalReaction direction="left-to-right" evidence="7">
        <dbReference type="Rhea" id="RHEA:37732"/>
    </physiologicalReaction>
</comment>
<comment type="catalytic activity">
    <reaction evidence="5">
        <text>a 1-acyl-sn-glycero-3-phosphoethanolamine + (5Z,8Z,11Z,14Z)-eicosatetraenoyl-CoA = 1-acyl-2-(5Z,8Z,11Z,14Z)-eicosatetraenoyl-sn-glycero-3-phosphoethanolamine + CoA</text>
        <dbReference type="Rhea" id="RHEA:37575"/>
        <dbReference type="ChEBI" id="CHEBI:57287"/>
        <dbReference type="ChEBI" id="CHEBI:57368"/>
        <dbReference type="ChEBI" id="CHEBI:64381"/>
        <dbReference type="ChEBI" id="CHEBI:75067"/>
    </reaction>
    <physiologicalReaction direction="left-to-right" evidence="7">
        <dbReference type="Rhea" id="RHEA:37576"/>
    </physiologicalReaction>
</comment>
<comment type="catalytic activity">
    <reaction evidence="5">
        <text>a 1-O-(1Z-alkenyl)-sn-glycero-3-phosphoethanolamine + octanoyl-CoA = 1-O-(1Z)-alkenyl-2-octanoyl-sn-glycero-3-phosphoethanolamine + CoA</text>
        <dbReference type="Rhea" id="RHEA:37763"/>
        <dbReference type="ChEBI" id="CHEBI:57287"/>
        <dbReference type="ChEBI" id="CHEBI:57386"/>
        <dbReference type="ChEBI" id="CHEBI:77288"/>
        <dbReference type="ChEBI" id="CHEBI:77301"/>
    </reaction>
    <physiologicalReaction direction="left-to-right" evidence="7">
        <dbReference type="Rhea" id="RHEA:37764"/>
    </physiologicalReaction>
</comment>
<comment type="catalytic activity">
    <reaction evidence="5">
        <text>a 1-O-(1Z-alkenyl)-sn-glycero-3-phosphoethanolamine + hexadecanoyl-CoA = 1-O-(1Z)-alkenyl-2-hexadecanoyl-sn-glycero-3-phosphoethanolamine + CoA</text>
        <dbReference type="Rhea" id="RHEA:37755"/>
        <dbReference type="ChEBI" id="CHEBI:57287"/>
        <dbReference type="ChEBI" id="CHEBI:57379"/>
        <dbReference type="ChEBI" id="CHEBI:77288"/>
        <dbReference type="ChEBI" id="CHEBI:77303"/>
    </reaction>
    <physiologicalReaction direction="left-to-right" evidence="7">
        <dbReference type="Rhea" id="RHEA:37756"/>
    </physiologicalReaction>
</comment>
<comment type="catalytic activity">
    <reaction evidence="5">
        <text>a 1-O-(1Z-alkenyl)-sn-glycero-3-phosphoethanolamine + octadecanoyl-CoA = 1-O-(1Z)-alkenyl-2-octadecanoyl-sn-glycero-3-phosphoethanolamine + CoA</text>
        <dbReference type="Rhea" id="RHEA:37759"/>
        <dbReference type="ChEBI" id="CHEBI:57287"/>
        <dbReference type="ChEBI" id="CHEBI:57394"/>
        <dbReference type="ChEBI" id="CHEBI:77288"/>
        <dbReference type="ChEBI" id="CHEBI:77302"/>
    </reaction>
    <physiologicalReaction direction="left-to-right" evidence="7">
        <dbReference type="Rhea" id="RHEA:37760"/>
    </physiologicalReaction>
</comment>
<comment type="catalytic activity">
    <reaction evidence="5">
        <text>a 1-O-(1Z-alkenyl)-sn-glycero-3-phosphoethanolamine + (9Z)-octadecenoyl-CoA = 1-O-(1Z)-alkenyl-2-(9Z)-octadecenoyl-sn-glycero-3-phosphoethanolamine + CoA</text>
        <dbReference type="Rhea" id="RHEA:37631"/>
        <dbReference type="ChEBI" id="CHEBI:57287"/>
        <dbReference type="ChEBI" id="CHEBI:57387"/>
        <dbReference type="ChEBI" id="CHEBI:77288"/>
        <dbReference type="ChEBI" id="CHEBI:77291"/>
    </reaction>
    <physiologicalReaction direction="left-to-right" evidence="7">
        <dbReference type="Rhea" id="RHEA:37632"/>
    </physiologicalReaction>
</comment>
<comment type="catalytic activity">
    <reaction evidence="5">
        <text>a 1-O-(1Z-alkenyl)-sn-glycero-3-phosphoethanolamine + (5Z,8Z,11Z,14Z)-eicosatetraenoyl-CoA = 1-O-(1Z)-alkenyl-2-(5Z,8Z,11Z,14Z)-eicosatetraenoyl-sn-glycero-3-phosphoethanolamine + CoA</text>
        <dbReference type="Rhea" id="RHEA:37635"/>
        <dbReference type="ChEBI" id="CHEBI:57287"/>
        <dbReference type="ChEBI" id="CHEBI:57368"/>
        <dbReference type="ChEBI" id="CHEBI:77288"/>
        <dbReference type="ChEBI" id="CHEBI:77295"/>
    </reaction>
    <physiologicalReaction direction="left-to-right" evidence="7">
        <dbReference type="Rhea" id="RHEA:37636"/>
    </physiologicalReaction>
</comment>
<comment type="catalytic activity">
    <reaction evidence="1">
        <text>a 1-acyl-sn-glycero-3-phosphocholine + hexadecanoyl-CoA = 1-acyl-2-hexadecanoyl-sn-glycero-3-phosphocholine + CoA</text>
        <dbReference type="Rhea" id="RHEA:37803"/>
        <dbReference type="ChEBI" id="CHEBI:57287"/>
        <dbReference type="ChEBI" id="CHEBI:57379"/>
        <dbReference type="ChEBI" id="CHEBI:58168"/>
        <dbReference type="ChEBI" id="CHEBI:75279"/>
    </reaction>
    <physiologicalReaction direction="left-to-right" evidence="1">
        <dbReference type="Rhea" id="RHEA:37804"/>
    </physiologicalReaction>
</comment>
<comment type="catalytic activity">
    <reaction evidence="5">
        <text>a 1-acyl-sn-glycero-3-phosphocholine + (9Z)-octadecenoyl-CoA = a 1-acyl-2-(9Z)-octadecenoyl-sn-glycero-3-phosphocholine + CoA</text>
        <dbReference type="Rhea" id="RHEA:33359"/>
        <dbReference type="ChEBI" id="CHEBI:57287"/>
        <dbReference type="ChEBI" id="CHEBI:57387"/>
        <dbReference type="ChEBI" id="CHEBI:58168"/>
        <dbReference type="ChEBI" id="CHEBI:58293"/>
    </reaction>
    <physiologicalReaction direction="left-to-right" evidence="7">
        <dbReference type="Rhea" id="RHEA:33360"/>
    </physiologicalReaction>
</comment>
<comment type="catalytic activity">
    <reaction evidence="5">
        <text>1-O-hexadecyl-sn-glycero-3-phosphocholine + (9Z)-octadecenoyl-CoA = 1-O-hexadecyl-2-(9Z)-octadecenoyl-sn-glycero-3-phosphocholine + CoA</text>
        <dbReference type="Rhea" id="RHEA:37783"/>
        <dbReference type="ChEBI" id="CHEBI:34112"/>
        <dbReference type="ChEBI" id="CHEBI:57287"/>
        <dbReference type="ChEBI" id="CHEBI:57387"/>
        <dbReference type="ChEBI" id="CHEBI:64496"/>
    </reaction>
    <physiologicalReaction direction="left-to-right" evidence="7">
        <dbReference type="Rhea" id="RHEA:37784"/>
    </physiologicalReaction>
</comment>
<comment type="catalytic activity">
    <reaction evidence="5">
        <text>1-O-hexadecyl-sn-glycero-3-phosphocholine + (5Z,8Z,11Z,14Z)-eicosatetraenoyl-CoA = 1-O-hexadecyl-2-(5Z,8Z,11Z,14Z)-eicosatetraenoyl-sn-glycero-3-phosphocholine + CoA</text>
        <dbReference type="Rhea" id="RHEA:37787"/>
        <dbReference type="ChEBI" id="CHEBI:55430"/>
        <dbReference type="ChEBI" id="CHEBI:57287"/>
        <dbReference type="ChEBI" id="CHEBI:57368"/>
        <dbReference type="ChEBI" id="CHEBI:64496"/>
    </reaction>
    <physiologicalReaction direction="left-to-right" evidence="7">
        <dbReference type="Rhea" id="RHEA:37788"/>
    </physiologicalReaction>
</comment>
<comment type="catalytic activity">
    <reaction evidence="5">
        <text>1-hexadecanoyl-sn-glycero-3-phospho-L-serine + (9Z)-octadecenoyl-CoA = 1-hexadecanoyl-2-(9Z-octadecenoyl)-sn-glycero-3-phospho-L-serine + CoA</text>
        <dbReference type="Rhea" id="RHEA:37531"/>
        <dbReference type="ChEBI" id="CHEBI:57287"/>
        <dbReference type="ChEBI" id="CHEBI:57387"/>
        <dbReference type="ChEBI" id="CHEBI:75020"/>
        <dbReference type="ChEBI" id="CHEBI:75029"/>
    </reaction>
    <physiologicalReaction direction="left-to-right" evidence="7">
        <dbReference type="Rhea" id="RHEA:37532"/>
    </physiologicalReaction>
</comment>
<comment type="catalytic activity">
    <reaction evidence="5">
        <text>1-octadecanoyl-sn-glycero-3-phospho-(1'-sn-glycerol) + (9Z)-octadecenoyl-CoA = 1-octadecanoyl-2-(9Z-octadecenoyl)-sn-glycero-3-phospho-(1'-sn-glycerol) + CoA</text>
        <dbReference type="Rhea" id="RHEA:37647"/>
        <dbReference type="ChEBI" id="CHEBI:57287"/>
        <dbReference type="ChEBI" id="CHEBI:57387"/>
        <dbReference type="ChEBI" id="CHEBI:72827"/>
        <dbReference type="ChEBI" id="CHEBI:72845"/>
    </reaction>
    <physiologicalReaction direction="left-to-right" evidence="7">
        <dbReference type="Rhea" id="RHEA:37648"/>
    </physiologicalReaction>
</comment>
<comment type="catalytic activity">
    <reaction evidence="5">
        <text>1-octadecanoyl-sn-glycero-3-phospho-(1'-sn-glycerol) + (5Z,8Z,11Z,14Z)-eicosatetraenoyl-CoA = 1-octadecanoyl-2-(5Z,8Z,11Z,14Z-eicosatetraenoyl)-sn-glycero-3-phospho-(1'-sn-glycerol) + CoA</text>
        <dbReference type="Rhea" id="RHEA:37779"/>
        <dbReference type="ChEBI" id="CHEBI:57287"/>
        <dbReference type="ChEBI" id="CHEBI:57368"/>
        <dbReference type="ChEBI" id="CHEBI:72827"/>
        <dbReference type="ChEBI" id="CHEBI:75266"/>
    </reaction>
    <physiologicalReaction direction="left-to-right" evidence="7">
        <dbReference type="Rhea" id="RHEA:37780"/>
    </physiologicalReaction>
</comment>
<comment type="biophysicochemical properties">
    <kinetics>
        <KM evidence="5">80 uM for lysophosphatidylethanolamine</KM>
        <KM evidence="5">20 uM for oleoyl-CoA</KM>
        <Vmax evidence="5">270.0 pmol/min/mg enzyme with lysophosphatidylethanolamine and oleoyl-CoA as substrates</Vmax>
    </kinetics>
</comment>
<comment type="pathway">
    <text>Lipid metabolism; phospholipid metabolism.</text>
</comment>
<comment type="subcellular location">
    <subcellularLocation>
        <location evidence="4 5">Endoplasmic reticulum membrane</location>
        <topology evidence="4 5">Multi-pass membrane protein</topology>
    </subcellularLocation>
</comment>
<comment type="tissue specificity">
    <text evidence="4 5">Widely expressed with predominant level in brain.</text>
</comment>
<comment type="similarity">
    <text evidence="6">Belongs to the 1-acyl-sn-glycerol-3-phosphate acyltransferase family.</text>
</comment>
<comment type="sequence caution" evidence="6">
    <conflict type="frameshift">
        <sequence resource="EMBL-CDS" id="AAC19156"/>
    </conflict>
</comment>
<comment type="sequence caution" evidence="6">
    <conflict type="miscellaneous discrepancy">
        <sequence resource="EMBL-CDS" id="AAC19156"/>
    </conflict>
    <text>Probable cloning artifact.</text>
</comment>
<comment type="sequence caution" evidence="6">
    <conflict type="frameshift">
        <sequence resource="EMBL-CDS" id="AAN33178"/>
    </conflict>
</comment>
<comment type="sequence caution" evidence="6">
    <conflict type="frameshift">
        <sequence resource="EMBL-CDS" id="AAP97722"/>
    </conflict>
</comment>
<sequence length="524" mass="57219">MSQGSPGDWAPLDPTPGPPASPNPFVHELHLSRLQRVKFCLLGALLAPIRVLLAFIVLFLLWPFAWLQVAGLSEEQLQEPITGWRKTVCHNGVLGLSRLLFFLLGFLRIRVRGQRASRLQAPVLVAAPHSTFFDPIVLLPCDLPKVVSRAENLSVPVIGALLRFNQAILVSRHDPASRRRVVEEVRRRATSGGKWPQVLFFPEGTCSNKKALLKFKPGAFIAGVPVQPVLIRYPNSLDTTSWAWRGPGVLKVLWLTASQPCSIVDVEFLPVYHPSPEESRDPTLYANNVQRVMAQALGIPATECEFVGSLPVIVVGRLKVALEPQLWELGKVLRKAGLSAGYVDAGAEPGRSRMISQEEFARQLQLSDPQTVAGAFGYFQQDTKGLVDFRDVALALAALDGGRSLEELTRLAFELFAEEQAEGPNRLLYKDGFSTILHLLLGSPHPAATALHAELCQAGSSQGLSLCQFQNFSLHDPLYGKLFSTYLRPPHTSRGTSQTPNASSPGNPTALANGTVQAPKQKGD</sequence>
<organism>
    <name type="scientific">Homo sapiens</name>
    <name type="common">Human</name>
    <dbReference type="NCBI Taxonomy" id="9606"/>
    <lineage>
        <taxon>Eukaryota</taxon>
        <taxon>Metazoa</taxon>
        <taxon>Chordata</taxon>
        <taxon>Craniata</taxon>
        <taxon>Vertebrata</taxon>
        <taxon>Euteleostomi</taxon>
        <taxon>Mammalia</taxon>
        <taxon>Eutheria</taxon>
        <taxon>Euarchontoglires</taxon>
        <taxon>Primates</taxon>
        <taxon>Haplorrhini</taxon>
        <taxon>Catarrhini</taxon>
        <taxon>Hominidae</taxon>
        <taxon>Homo</taxon>
    </lineage>
</organism>
<protein>
    <recommendedName>
        <fullName>Lysophospholipid acyltransferase LPCAT4</fullName>
    </recommendedName>
    <alternativeName>
        <fullName>1-acylglycerol-3-phosphate O-acyltransferase 7</fullName>
        <shortName>1-AGP acyltransferase 7</shortName>
        <shortName>1-AGPAT 7</shortName>
    </alternativeName>
    <alternativeName>
        <fullName>1-acylglycerophosphocholine O-acyltransferase</fullName>
        <ecNumber evidence="5">2.3.1.23</ecNumber>
    </alternativeName>
    <alternativeName>
        <fullName>1-acylglycerophosphoserine O-acyltransferase</fullName>
        <ecNumber evidence="5">2.3.1.n6</ecNumber>
    </alternativeName>
    <alternativeName>
        <fullName>1-alkenylglycerophosphoethanolamine O-acyltransferase</fullName>
        <ecNumber evidence="5">2.3.1.121</ecNumber>
    </alternativeName>
    <alternativeName>
        <fullName>1-alkylglycerophosphocholine O-acetyltransferase</fullName>
        <ecNumber evidence="5">2.3.1.67</ecNumber>
    </alternativeName>
    <alternativeName>
        <fullName>Acyltransferase-like 3</fullName>
    </alternativeName>
    <alternativeName>
        <fullName>Lysophosphatidylcholine acyltransferase 4</fullName>
    </alternativeName>
    <alternativeName>
        <fullName>Lysophosphatidylethanolamine acyltransferase 2</fullName>
        <ecNumber evidence="5">2.3.1.n7</ecNumber>
    </alternativeName>
    <alternativeName>
        <fullName>Plasmalogen synthase</fullName>
    </alternativeName>
</protein>